<sequence>NLKRVTLELGGKSPCIVFADADLDNAVEFAHRGLFFHQGQCCVAASRLFVEESIYDEFVRRSVERAKKYVLGNPLTPGVSQGPQIDKEQYDKIIDLIESGKKEGAKLECGGGPWGNKGYFIQPTVFSNVTDEMRIAKEEIFGPVQQIMKFKSLDEVIKRANNTFYGLAAGVFTKDLDKAVTVSAALQAGTVWVNCYMANSVQCPFGGFKMSGNGRELGEYGLHEYTEVKTVTMKISKKNS</sequence>
<comment type="function">
    <text>Elephant shrews, in contrast to other mammals, possess both a lens- and a non-lens specific class-1 aldehyde dehydrogenase. Can convert/oxidize retinaldehyde to retinoic acid.</text>
</comment>
<comment type="catalytic activity">
    <reaction>
        <text>an aldehyde + NAD(+) + H2O = a carboxylate + NADH + 2 H(+)</text>
        <dbReference type="Rhea" id="RHEA:16185"/>
        <dbReference type="ChEBI" id="CHEBI:15377"/>
        <dbReference type="ChEBI" id="CHEBI:15378"/>
        <dbReference type="ChEBI" id="CHEBI:17478"/>
        <dbReference type="ChEBI" id="CHEBI:29067"/>
        <dbReference type="ChEBI" id="CHEBI:57540"/>
        <dbReference type="ChEBI" id="CHEBI:57945"/>
        <dbReference type="EC" id="1.2.1.3"/>
    </reaction>
</comment>
<comment type="pathway">
    <text>Alcohol metabolism; ethanol degradation; acetate from ethanol: step 2/2.</text>
</comment>
<comment type="subunit">
    <text evidence="1">Homotetramer.</text>
</comment>
<comment type="subcellular location">
    <subcellularLocation>
        <location evidence="1">Cytoplasm</location>
    </subcellularLocation>
</comment>
<comment type="tissue specificity">
    <text>Non-lens specific, predominant form expressed in the liver.</text>
</comment>
<comment type="similarity">
    <text evidence="4">Belongs to the aldehyde dehydrogenase family.</text>
</comment>
<name>ALDH2_MACPR</name>
<dbReference type="EC" id="1.2.1.3"/>
<dbReference type="EMBL" id="U40486">
    <property type="protein sequence ID" value="AAC48589.1"/>
    <property type="molecule type" value="mRNA"/>
</dbReference>
<dbReference type="SMR" id="Q29491"/>
<dbReference type="UniPathway" id="UPA00780">
    <property type="reaction ID" value="UER00768"/>
</dbReference>
<dbReference type="GO" id="GO:0005737">
    <property type="term" value="C:cytoplasm"/>
    <property type="evidence" value="ECO:0007669"/>
    <property type="project" value="UniProtKB-SubCell"/>
</dbReference>
<dbReference type="GO" id="GO:0004029">
    <property type="term" value="F:aldehyde dehydrogenase (NAD+) activity"/>
    <property type="evidence" value="ECO:0000250"/>
    <property type="project" value="UniProtKB"/>
</dbReference>
<dbReference type="GO" id="GO:0046185">
    <property type="term" value="P:aldehyde catabolic process"/>
    <property type="evidence" value="ECO:0000250"/>
    <property type="project" value="UniProtKB"/>
</dbReference>
<dbReference type="GO" id="GO:0006068">
    <property type="term" value="P:ethanol catabolic process"/>
    <property type="evidence" value="ECO:0007669"/>
    <property type="project" value="UniProtKB-UniPathway"/>
</dbReference>
<dbReference type="FunFam" id="3.40.605.10:FF:000026">
    <property type="entry name" value="Aldehyde dehydrogenase, putative"/>
    <property type="match status" value="1"/>
</dbReference>
<dbReference type="FunFam" id="3.40.309.10:FF:000001">
    <property type="entry name" value="Mitochondrial aldehyde dehydrogenase 2"/>
    <property type="match status" value="1"/>
</dbReference>
<dbReference type="Gene3D" id="3.40.605.10">
    <property type="entry name" value="Aldehyde Dehydrogenase, Chain A, domain 1"/>
    <property type="match status" value="1"/>
</dbReference>
<dbReference type="Gene3D" id="3.40.309.10">
    <property type="entry name" value="Aldehyde Dehydrogenase, Chain A, domain 2"/>
    <property type="match status" value="1"/>
</dbReference>
<dbReference type="InterPro" id="IPR016161">
    <property type="entry name" value="Ald_DH/histidinol_DH"/>
</dbReference>
<dbReference type="InterPro" id="IPR016163">
    <property type="entry name" value="Ald_DH_C"/>
</dbReference>
<dbReference type="InterPro" id="IPR016160">
    <property type="entry name" value="Ald_DH_CS_CYS"/>
</dbReference>
<dbReference type="InterPro" id="IPR029510">
    <property type="entry name" value="Ald_DH_CS_GLU"/>
</dbReference>
<dbReference type="InterPro" id="IPR016162">
    <property type="entry name" value="Ald_DH_N"/>
</dbReference>
<dbReference type="InterPro" id="IPR015590">
    <property type="entry name" value="Aldehyde_DH_dom"/>
</dbReference>
<dbReference type="PANTHER" id="PTHR11699">
    <property type="entry name" value="ALDEHYDE DEHYDROGENASE-RELATED"/>
    <property type="match status" value="1"/>
</dbReference>
<dbReference type="Pfam" id="PF00171">
    <property type="entry name" value="Aldedh"/>
    <property type="match status" value="1"/>
</dbReference>
<dbReference type="SUPFAM" id="SSF53720">
    <property type="entry name" value="ALDH-like"/>
    <property type="match status" value="1"/>
</dbReference>
<dbReference type="PROSITE" id="PS00070">
    <property type="entry name" value="ALDEHYDE_DEHYDR_CYS"/>
    <property type="match status" value="1"/>
</dbReference>
<dbReference type="PROSITE" id="PS00687">
    <property type="entry name" value="ALDEHYDE_DEHYDR_GLU"/>
    <property type="match status" value="1"/>
</dbReference>
<evidence type="ECO:0000250" key="1"/>
<evidence type="ECO:0000250" key="2">
    <source>
        <dbReference type="UniProtKB" id="P47738"/>
    </source>
</evidence>
<evidence type="ECO:0000255" key="3"/>
<evidence type="ECO:0000305" key="4"/>
<keyword id="KW-0007">Acetylation</keyword>
<keyword id="KW-0963">Cytoplasm</keyword>
<keyword id="KW-0520">NAD</keyword>
<keyword id="KW-0560">Oxidoreductase</keyword>
<organism>
    <name type="scientific">Macroscelides proboscideus</name>
    <name type="common">Short-eared elephant shrew</name>
    <dbReference type="NCBI Taxonomy" id="29082"/>
    <lineage>
        <taxon>Eukaryota</taxon>
        <taxon>Metazoa</taxon>
        <taxon>Chordata</taxon>
        <taxon>Craniata</taxon>
        <taxon>Vertebrata</taxon>
        <taxon>Euteleostomi</taxon>
        <taxon>Mammalia</taxon>
        <taxon>Eutheria</taxon>
        <taxon>Afrotheria</taxon>
        <taxon>Macroscelidea</taxon>
        <taxon>Macroscelididae</taxon>
        <taxon>Macroscelides</taxon>
    </lineage>
</organism>
<feature type="chain" id="PRO_0000056429" description="Aldehyde dehydrogenase, cytosolic 2">
    <location>
        <begin position="1" status="less than"/>
        <end position="240"/>
    </location>
</feature>
<feature type="active site" evidence="3">
    <location>
        <position position="8"/>
    </location>
</feature>
<feature type="active site" evidence="3">
    <location>
        <position position="42"/>
    </location>
</feature>
<feature type="modified residue" description="N6-acetyllysine" evidence="2">
    <location>
        <position position="106"/>
    </location>
</feature>
<feature type="modified residue" description="N6-acetyllysine" evidence="2">
    <location>
        <position position="149"/>
    </location>
</feature>
<feature type="modified residue" description="N6-acetyllysine" evidence="2">
    <location>
        <position position="151"/>
    </location>
</feature>
<feature type="modified residue" description="N6-acetyllysine" evidence="2">
    <location>
        <position position="174"/>
    </location>
</feature>
<feature type="non-terminal residue">
    <location>
        <position position="1"/>
    </location>
</feature>
<protein>
    <recommendedName>
        <fullName>Aldehyde dehydrogenase, cytosolic 2</fullName>
        <ecNumber>1.2.1.3</ecNumber>
    </recommendedName>
    <alternativeName>
        <fullName>ALDH class 1</fullName>
    </alternativeName>
    <alternativeName>
        <fullName>ALDH1-NL</fullName>
    </alternativeName>
    <alternativeName>
        <fullName>Non-lens ALDH1</fullName>
    </alternativeName>
</protein>
<reference key="1">
    <citation type="journal article" date="1996" name="J. Biol. Chem.">
        <title>A retinaldehyde dehydrogenase as a structural protein in a mammalian eye lens. Gene recruitment of eta-crystallin.</title>
        <authorList>
            <person name="Graham C."/>
            <person name="Hodin J."/>
            <person name="Wistow G."/>
        </authorList>
    </citation>
    <scope>NUCLEOTIDE SEQUENCE [MRNA]</scope>
    <source>
        <tissue>Liver</tissue>
    </source>
</reference>
<accession>Q29491</accession>
<proteinExistence type="evidence at transcript level"/>